<proteinExistence type="inferred from homology"/>
<dbReference type="EMBL" id="CR382127">
    <property type="protein sequence ID" value="CAG83738.1"/>
    <property type="molecule type" value="Genomic_DNA"/>
</dbReference>
<dbReference type="RefSeq" id="XP_499812.1">
    <property type="nucleotide sequence ID" value="XM_499812.1"/>
</dbReference>
<dbReference type="SMR" id="Q6CHP9"/>
<dbReference type="FunCoup" id="Q6CHP9">
    <property type="interactions" value="102"/>
</dbReference>
<dbReference type="STRING" id="284591.Q6CHP9"/>
<dbReference type="EnsemblFungi" id="CAG83738">
    <property type="protein sequence ID" value="CAG83738"/>
    <property type="gene ID" value="YALI0_A06611g"/>
</dbReference>
<dbReference type="KEGG" id="yli:2905884"/>
<dbReference type="VEuPathDB" id="FungiDB:YALI0_A06611g"/>
<dbReference type="HOGENOM" id="CLU_361776_0_0_1"/>
<dbReference type="InParanoid" id="Q6CHP9"/>
<dbReference type="OMA" id="RERYPPM"/>
<dbReference type="OrthoDB" id="49501at4891"/>
<dbReference type="Proteomes" id="UP000001300">
    <property type="component" value="Chromosome A"/>
</dbReference>
<dbReference type="GO" id="GO:0005737">
    <property type="term" value="C:cytoplasm"/>
    <property type="evidence" value="ECO:0000318"/>
    <property type="project" value="GO_Central"/>
</dbReference>
<dbReference type="GO" id="GO:0005739">
    <property type="term" value="C:mitochondrion"/>
    <property type="evidence" value="ECO:0007669"/>
    <property type="project" value="UniProtKB-SubCell"/>
</dbReference>
<dbReference type="GO" id="GO:0003729">
    <property type="term" value="F:mRNA binding"/>
    <property type="evidence" value="ECO:0000318"/>
    <property type="project" value="GO_Central"/>
</dbReference>
<dbReference type="GO" id="GO:0006397">
    <property type="term" value="P:mRNA processing"/>
    <property type="evidence" value="ECO:0000318"/>
    <property type="project" value="GO_Central"/>
</dbReference>
<dbReference type="GO" id="GO:0008380">
    <property type="term" value="P:RNA splicing"/>
    <property type="evidence" value="ECO:0007669"/>
    <property type="project" value="UniProtKB-KW"/>
</dbReference>
<dbReference type="Gene3D" id="1.25.40.10">
    <property type="entry name" value="Tetratricopeptide repeat domain"/>
    <property type="match status" value="2"/>
</dbReference>
<dbReference type="InterPro" id="IPR002885">
    <property type="entry name" value="Pentatricopeptide_rpt"/>
</dbReference>
<dbReference type="InterPro" id="IPR033443">
    <property type="entry name" value="PROP1-like_PPR_dom"/>
</dbReference>
<dbReference type="InterPro" id="IPR011990">
    <property type="entry name" value="TPR-like_helical_dom_sf"/>
</dbReference>
<dbReference type="NCBIfam" id="TIGR00756">
    <property type="entry name" value="PPR"/>
    <property type="match status" value="2"/>
</dbReference>
<dbReference type="PANTHER" id="PTHR47447">
    <property type="entry name" value="OS03G0856100 PROTEIN"/>
    <property type="match status" value="1"/>
</dbReference>
<dbReference type="PANTHER" id="PTHR47447:SF17">
    <property type="entry name" value="OS12G0638900 PROTEIN"/>
    <property type="match status" value="1"/>
</dbReference>
<dbReference type="Pfam" id="PF01535">
    <property type="entry name" value="PPR"/>
    <property type="match status" value="1"/>
</dbReference>
<dbReference type="Pfam" id="PF17177">
    <property type="entry name" value="PPR_long"/>
    <property type="match status" value="1"/>
</dbReference>
<dbReference type="PROSITE" id="PS51375">
    <property type="entry name" value="PPR"/>
    <property type="match status" value="5"/>
</dbReference>
<keyword id="KW-0496">Mitochondrion</keyword>
<keyword id="KW-0507">mRNA processing</keyword>
<keyword id="KW-0508">mRNA splicing</keyword>
<keyword id="KW-1185">Reference proteome</keyword>
<keyword id="KW-0677">Repeat</keyword>
<keyword id="KW-0809">Transit peptide</keyword>
<accession>Q6CHP9</accession>
<protein>
    <recommendedName>
        <fullName>Mitochondrial 15S rRNA processing factor CCM1</fullName>
    </recommendedName>
</protein>
<name>CCM1_YARLI</name>
<feature type="transit peptide" description="Mitochondrion" evidence="2">
    <location>
        <begin position="1"/>
        <end position="23"/>
    </location>
</feature>
<feature type="chain" id="PRO_0000402270" description="Mitochondrial 15S rRNA processing factor CCM1" evidence="2">
    <location>
        <begin position="24"/>
        <end position="773"/>
    </location>
</feature>
<feature type="repeat" description="PPR 1" evidence="3">
    <location>
        <begin position="220"/>
        <end position="254"/>
    </location>
</feature>
<feature type="repeat" description="PPR 2" evidence="3">
    <location>
        <begin position="255"/>
        <end position="285"/>
    </location>
</feature>
<feature type="repeat" description="PPR 3" evidence="3">
    <location>
        <begin position="294"/>
        <end position="328"/>
    </location>
</feature>
<feature type="repeat" description="PPR 4" evidence="3">
    <location>
        <begin position="331"/>
        <end position="365"/>
    </location>
</feature>
<feature type="repeat" description="PPR 5" evidence="3">
    <location>
        <begin position="366"/>
        <end position="400"/>
    </location>
</feature>
<feature type="region of interest" description="Disordered" evidence="4">
    <location>
        <begin position="89"/>
        <end position="122"/>
    </location>
</feature>
<feature type="compositionally biased region" description="Basic and acidic residues" evidence="4">
    <location>
        <begin position="89"/>
        <end position="106"/>
    </location>
</feature>
<sequence length="773" mass="88107">MLRARLLVPLVRPALVHRLDRCYSTALGSRFRKSNAVRSELKFDFPDVPVKEELFVQETPDKPLKENKTHVSDEDIDSLFDSLMSDHKAAEATEQHKELPPAEQERPSGANTHTAPIKHDTKSPMEYLAKSKLTPHVSRQVAKAMAGSPTQLLLATPASHHISTPAYQNDLWKHVISTLNTSKFQIPDFNSLMTTIPVDIRAQFLPQIEEWISQRGVKPSAITYGQVMLGYAEDGNVEKVEERFRQMIDNNITPTVHTYAHRLKACDKRGDLKQAMEIFDDLKLAQQLYGIRPNQVIFTTLISTSLRNHKVELASQIFEYMKYASLETQPTAHTYNSLITASAIRSNTERALDLFEEMKQKSVANVRTYQSLILACLRQEKYHLKAWELLLELREQHSESFYSRHTLVVVFQAAAVTGDLVFLRSLYKQLCMSPETYPDAILTQLLMQAYARYDTRTKPVASSALRATWGRLYGGNAQEMMRGFLFPDIEGMVQLNEEHPGMIPPFLPTNTIESLSFDRKKIIAESRAIFQFLKNNKPQLLDNIAATDYLKAGARHRDFPEFLRRYNEVSVGAGEAEGAVISPSEMKTYSARQKKPQRYDLQTQFSPAPRSDAHFFIALNAVQADCIADASERDPNLNHPLRRLTPQEMTDRLEFSQDVWVERGKWRKSDAYKNKYRTEAQQISADYNFALKIINALAALKQLGEAAAILSATPATFNWKKHDLAFFHNVAQAFYHEEAMKQIHKAVSRSKHLDEVIRNPDSEKSAEFDVFSI</sequence>
<evidence type="ECO:0000250" key="1">
    <source>
        <dbReference type="UniProtKB" id="P48237"/>
    </source>
</evidence>
<evidence type="ECO:0000255" key="2"/>
<evidence type="ECO:0000255" key="3">
    <source>
        <dbReference type="PROSITE-ProRule" id="PRU00708"/>
    </source>
</evidence>
<evidence type="ECO:0000256" key="4">
    <source>
        <dbReference type="SAM" id="MobiDB-lite"/>
    </source>
</evidence>
<evidence type="ECO:0000305" key="5"/>
<reference key="1">
    <citation type="journal article" date="2004" name="Nature">
        <title>Genome evolution in yeasts.</title>
        <authorList>
            <person name="Dujon B."/>
            <person name="Sherman D."/>
            <person name="Fischer G."/>
            <person name="Durrens P."/>
            <person name="Casaregola S."/>
            <person name="Lafontaine I."/>
            <person name="de Montigny J."/>
            <person name="Marck C."/>
            <person name="Neuveglise C."/>
            <person name="Talla E."/>
            <person name="Goffard N."/>
            <person name="Frangeul L."/>
            <person name="Aigle M."/>
            <person name="Anthouard V."/>
            <person name="Babour A."/>
            <person name="Barbe V."/>
            <person name="Barnay S."/>
            <person name="Blanchin S."/>
            <person name="Beckerich J.-M."/>
            <person name="Beyne E."/>
            <person name="Bleykasten C."/>
            <person name="Boisrame A."/>
            <person name="Boyer J."/>
            <person name="Cattolico L."/>
            <person name="Confanioleri F."/>
            <person name="de Daruvar A."/>
            <person name="Despons L."/>
            <person name="Fabre E."/>
            <person name="Fairhead C."/>
            <person name="Ferry-Dumazet H."/>
            <person name="Groppi A."/>
            <person name="Hantraye F."/>
            <person name="Hennequin C."/>
            <person name="Jauniaux N."/>
            <person name="Joyet P."/>
            <person name="Kachouri R."/>
            <person name="Kerrest A."/>
            <person name="Koszul R."/>
            <person name="Lemaire M."/>
            <person name="Lesur I."/>
            <person name="Ma L."/>
            <person name="Muller H."/>
            <person name="Nicaud J.-M."/>
            <person name="Nikolski M."/>
            <person name="Oztas S."/>
            <person name="Ozier-Kalogeropoulos O."/>
            <person name="Pellenz S."/>
            <person name="Potier S."/>
            <person name="Richard G.-F."/>
            <person name="Straub M.-L."/>
            <person name="Suleau A."/>
            <person name="Swennen D."/>
            <person name="Tekaia F."/>
            <person name="Wesolowski-Louvel M."/>
            <person name="Westhof E."/>
            <person name="Wirth B."/>
            <person name="Zeniou-Meyer M."/>
            <person name="Zivanovic Y."/>
            <person name="Bolotin-Fukuhara M."/>
            <person name="Thierry A."/>
            <person name="Bouchier C."/>
            <person name="Caudron B."/>
            <person name="Scarpelli C."/>
            <person name="Gaillardin C."/>
            <person name="Weissenbach J."/>
            <person name="Wincker P."/>
            <person name="Souciet J.-L."/>
        </authorList>
    </citation>
    <scope>NUCLEOTIDE SEQUENCE [LARGE SCALE GENOMIC DNA]</scope>
    <source>
        <strain>CLIB 122 / E 150</strain>
    </source>
</reference>
<gene>
    <name type="primary">CCM1</name>
    <name type="ordered locus">YALI0A06611g</name>
</gene>
<comment type="function">
    <text evidence="1">Regulates mitochondrial small subunit maturation by controlling 15S rRNA 5'-end processing. Localizes to the 5' precursor of the 15S rRNA in a position that is subsequently occupied by mS47 in the mature yeast mtSSU. Uses structure and sequence-specific RNA recognition, binding to a single-stranded region of the precursor and specifically recognizing bases -6 to -1. The exchange of Ccm1 for mS47 is coupled to the irreversible removal of precursor rRNA that is accompanied by conformational changes of the mitoribosomal proteins uS5m and mS26. These conformational changes signal completion of 5'-end rRNA processing through protection of the mature 5'-end of the 15S rRNA and stabilization of mS47. The removal of the 5' precursor together with the dissociation of Ccm1 may be catalyzed by the 5'-3' exoribonuclease Pet127. Involved in the specific removal of group I introns in mitochondrial encoded transcripts.</text>
</comment>
<comment type="subunit">
    <text evidence="1">Binds to mitochondrial small subunit 15S rRNA.</text>
</comment>
<comment type="subcellular location">
    <subcellularLocation>
        <location evidence="1">Mitochondrion</location>
    </subcellularLocation>
</comment>
<comment type="miscellaneous">
    <text evidence="1">Involved in mitochondrial-nuclear incompatibility, a major determinant in reproductive isolation between species, through hybrid incompatibility of Ccm1 and its interacting partner 15S rRNA between yeast species.</text>
</comment>
<comment type="similarity">
    <text evidence="5">Belongs to the CCM1 family.</text>
</comment>
<organism>
    <name type="scientific">Yarrowia lipolytica (strain CLIB 122 / E 150)</name>
    <name type="common">Yeast</name>
    <name type="synonym">Candida lipolytica</name>
    <dbReference type="NCBI Taxonomy" id="284591"/>
    <lineage>
        <taxon>Eukaryota</taxon>
        <taxon>Fungi</taxon>
        <taxon>Dikarya</taxon>
        <taxon>Ascomycota</taxon>
        <taxon>Saccharomycotina</taxon>
        <taxon>Dipodascomycetes</taxon>
        <taxon>Dipodascales</taxon>
        <taxon>Dipodascales incertae sedis</taxon>
        <taxon>Yarrowia</taxon>
    </lineage>
</organism>